<keyword id="KW-0342">GTP-binding</keyword>
<keyword id="KW-0472">Membrane</keyword>
<keyword id="KW-0496">Mitochondrion</keyword>
<keyword id="KW-0999">Mitochondrion inner membrane</keyword>
<keyword id="KW-0547">Nucleotide-binding</keyword>
<keyword id="KW-1185">Reference proteome</keyword>
<keyword id="KW-0809">Transit peptide</keyword>
<organism>
    <name type="scientific">Schizosaccharomyces japonicus (strain yFS275 / FY16936)</name>
    <name type="common">Fission yeast</name>
    <dbReference type="NCBI Taxonomy" id="402676"/>
    <lineage>
        <taxon>Eukaryota</taxon>
        <taxon>Fungi</taxon>
        <taxon>Dikarya</taxon>
        <taxon>Ascomycota</taxon>
        <taxon>Taphrinomycotina</taxon>
        <taxon>Schizosaccharomycetes</taxon>
        <taxon>Schizosaccharomycetales</taxon>
        <taxon>Schizosaccharomycetaceae</taxon>
        <taxon>Schizosaccharomyces</taxon>
    </lineage>
</organism>
<sequence length="328" mass="36978">MTTWFPGHMKTTLKRLRDSVSKNDVIVEVRDARIPLSSRNPALETLAANRKRVVVYNKCDLAFPSAGDLCKTRALNSVRAFEETYVETLARWETIQTLRRYVGTVSNVPECIKRLLQLLQKLTYSDHAASNRTVKVFVVGMPNVGKSSVMNALRHASLHRRKVAVVGSHPGVTRNVGEVVRLFEGKNVYMVDTPGIMLPTILQPEDAIKFALVHAMKDGRLHNAVVVDYLLYRLNLIDPNTYTRLSSPTNDVSTFLHNAAVHTGKLGKGGTVNDDLIASYVLQLYRTGFFGAFVLDSMEEEQWQQRLALEKNLVRRNQRRVCSTRKKA</sequence>
<gene>
    <name evidence="2" type="primary">mtg1</name>
    <name type="ORF">SJAG_00659</name>
</gene>
<reference key="1">
    <citation type="journal article" date="2011" name="Science">
        <title>Comparative functional genomics of the fission yeasts.</title>
        <authorList>
            <person name="Rhind N."/>
            <person name="Chen Z."/>
            <person name="Yassour M."/>
            <person name="Thompson D.A."/>
            <person name="Haas B.J."/>
            <person name="Habib N."/>
            <person name="Wapinski I."/>
            <person name="Roy S."/>
            <person name="Lin M.F."/>
            <person name="Heiman D.I."/>
            <person name="Young S.K."/>
            <person name="Furuya K."/>
            <person name="Guo Y."/>
            <person name="Pidoux A."/>
            <person name="Chen H.M."/>
            <person name="Robbertse B."/>
            <person name="Goldberg J.M."/>
            <person name="Aoki K."/>
            <person name="Bayne E.H."/>
            <person name="Berlin A.M."/>
            <person name="Desjardins C.A."/>
            <person name="Dobbs E."/>
            <person name="Dukaj L."/>
            <person name="Fan L."/>
            <person name="FitzGerald M.G."/>
            <person name="French C."/>
            <person name="Gujja S."/>
            <person name="Hansen K."/>
            <person name="Keifenheim D."/>
            <person name="Levin J.Z."/>
            <person name="Mosher R.A."/>
            <person name="Mueller C.A."/>
            <person name="Pfiffner J."/>
            <person name="Priest M."/>
            <person name="Russ C."/>
            <person name="Smialowska A."/>
            <person name="Swoboda P."/>
            <person name="Sykes S.M."/>
            <person name="Vaughn M."/>
            <person name="Vengrova S."/>
            <person name="Yoder R."/>
            <person name="Zeng Q."/>
            <person name="Allshire R."/>
            <person name="Baulcombe D."/>
            <person name="Birren B.W."/>
            <person name="Brown W."/>
            <person name="Ekwall K."/>
            <person name="Kellis M."/>
            <person name="Leatherwood J."/>
            <person name="Levin H."/>
            <person name="Margalit H."/>
            <person name="Martienssen R."/>
            <person name="Nieduszynski C.A."/>
            <person name="Spatafora J.W."/>
            <person name="Friedman N."/>
            <person name="Dalgaard J.Z."/>
            <person name="Baumann P."/>
            <person name="Niki H."/>
            <person name="Regev A."/>
            <person name="Nusbaum C."/>
        </authorList>
    </citation>
    <scope>NUCLEOTIDE SEQUENCE [LARGE SCALE GENOMIC DNA]</scope>
    <source>
        <strain>yFS275 / FY16936</strain>
    </source>
</reference>
<dbReference type="EMBL" id="KE651166">
    <property type="protein sequence ID" value="EEB05638.1"/>
    <property type="molecule type" value="Genomic_DNA"/>
</dbReference>
<dbReference type="RefSeq" id="XP_002171931.1">
    <property type="nucleotide sequence ID" value="XM_002171895.1"/>
</dbReference>
<dbReference type="SMR" id="B6JW87"/>
<dbReference type="STRING" id="402676.B6JW87"/>
<dbReference type="EnsemblFungi" id="EEB05638">
    <property type="protein sequence ID" value="EEB05638"/>
    <property type="gene ID" value="SJAG_00659"/>
</dbReference>
<dbReference type="GeneID" id="7050697"/>
<dbReference type="JaponicusDB" id="SJAG_00659">
    <property type="gene designation" value="mtg1"/>
</dbReference>
<dbReference type="VEuPathDB" id="FungiDB:SJAG_00659"/>
<dbReference type="eggNOG" id="KOG2485">
    <property type="taxonomic scope" value="Eukaryota"/>
</dbReference>
<dbReference type="HOGENOM" id="CLU_011106_0_1_1"/>
<dbReference type="OMA" id="GVLWPKF"/>
<dbReference type="OrthoDB" id="269151at2759"/>
<dbReference type="Proteomes" id="UP000001744">
    <property type="component" value="Unassembled WGS sequence"/>
</dbReference>
<dbReference type="GO" id="GO:0005743">
    <property type="term" value="C:mitochondrial inner membrane"/>
    <property type="evidence" value="ECO:0007669"/>
    <property type="project" value="UniProtKB-SubCell"/>
</dbReference>
<dbReference type="GO" id="GO:0005739">
    <property type="term" value="C:mitochondrion"/>
    <property type="evidence" value="ECO:0000318"/>
    <property type="project" value="GO_Central"/>
</dbReference>
<dbReference type="GO" id="GO:0005525">
    <property type="term" value="F:GTP binding"/>
    <property type="evidence" value="ECO:0007669"/>
    <property type="project" value="UniProtKB-KW"/>
</dbReference>
<dbReference type="GO" id="GO:0003924">
    <property type="term" value="F:GTPase activity"/>
    <property type="evidence" value="ECO:0000318"/>
    <property type="project" value="GO_Central"/>
</dbReference>
<dbReference type="GO" id="GO:0032543">
    <property type="term" value="P:mitochondrial translation"/>
    <property type="evidence" value="ECO:0000318"/>
    <property type="project" value="GO_Central"/>
</dbReference>
<dbReference type="CDD" id="cd01856">
    <property type="entry name" value="YlqF"/>
    <property type="match status" value="1"/>
</dbReference>
<dbReference type="Gene3D" id="1.10.1580.10">
    <property type="match status" value="1"/>
</dbReference>
<dbReference type="Gene3D" id="3.40.50.300">
    <property type="entry name" value="P-loop containing nucleotide triphosphate hydrolases"/>
    <property type="match status" value="1"/>
</dbReference>
<dbReference type="InterPro" id="IPR030378">
    <property type="entry name" value="G_CP_dom"/>
</dbReference>
<dbReference type="InterPro" id="IPR006073">
    <property type="entry name" value="GTP-bd"/>
</dbReference>
<dbReference type="InterPro" id="IPR023179">
    <property type="entry name" value="GTP-bd_ortho_bundle_sf"/>
</dbReference>
<dbReference type="InterPro" id="IPR016478">
    <property type="entry name" value="GTPase_MTG1"/>
</dbReference>
<dbReference type="InterPro" id="IPR027417">
    <property type="entry name" value="P-loop_NTPase"/>
</dbReference>
<dbReference type="PANTHER" id="PTHR45782">
    <property type="entry name" value="MITOCHONDRIAL RIBOSOME-ASSOCIATED GTPASE 1"/>
    <property type="match status" value="1"/>
</dbReference>
<dbReference type="PANTHER" id="PTHR45782:SF4">
    <property type="entry name" value="MITOCHONDRIAL RIBOSOME-ASSOCIATED GTPASE 1"/>
    <property type="match status" value="1"/>
</dbReference>
<dbReference type="Pfam" id="PF01926">
    <property type="entry name" value="MMR_HSR1"/>
    <property type="match status" value="1"/>
</dbReference>
<dbReference type="PIRSF" id="PIRSF006230">
    <property type="entry name" value="MG442"/>
    <property type="match status" value="1"/>
</dbReference>
<dbReference type="SUPFAM" id="SSF52540">
    <property type="entry name" value="P-loop containing nucleoside triphosphate hydrolases"/>
    <property type="match status" value="1"/>
</dbReference>
<dbReference type="PROSITE" id="PS51721">
    <property type="entry name" value="G_CP"/>
    <property type="match status" value="1"/>
</dbReference>
<accession>B6JW87</accession>
<protein>
    <recommendedName>
        <fullName evidence="5">Mitochondrial GTPase 1</fullName>
    </recommendedName>
</protein>
<proteinExistence type="inferred from homology"/>
<feature type="transit peptide" description="Mitochondrion" evidence="2 3">
    <location>
        <begin position="1"/>
        <end status="unknown"/>
    </location>
</feature>
<feature type="chain" id="PRO_0000409878" description="Mitochondrial GTPase 1" evidence="2">
    <location>
        <begin status="unknown"/>
        <end position="328"/>
    </location>
</feature>
<feature type="domain" description="CP-type G" evidence="4">
    <location>
        <begin position="10"/>
        <end position="199"/>
    </location>
</feature>
<feature type="binding site" evidence="1">
    <location>
        <begin position="57"/>
        <end position="60"/>
    </location>
    <ligand>
        <name>GTP</name>
        <dbReference type="ChEBI" id="CHEBI:37565"/>
    </ligand>
</feature>
<feature type="binding site" evidence="1">
    <location>
        <begin position="143"/>
        <end position="148"/>
    </location>
    <ligand>
        <name>GTP</name>
        <dbReference type="ChEBI" id="CHEBI:37565"/>
    </ligand>
</feature>
<feature type="binding site" evidence="1">
    <location>
        <position position="195"/>
    </location>
    <ligand>
        <name>GTP</name>
        <dbReference type="ChEBI" id="CHEBI:37565"/>
    </ligand>
</feature>
<comment type="function">
    <text evidence="2">Mitochondrial GTPase involved in assembly of the large ribosomal subunit (By similarity). Plays a role in expression of the mitochondrial translational machinery (By similarity).</text>
</comment>
<comment type="subcellular location">
    <subcellularLocation>
        <location evidence="2">Mitochondrion inner membrane</location>
        <topology evidence="2">Peripheral membrane protein</topology>
    </subcellularLocation>
</comment>
<comment type="similarity">
    <text evidence="4">Belongs to the TRAFAC class YlqF/YawG GTPase family. MTG1 subfamily.</text>
</comment>
<evidence type="ECO:0000250" key="1">
    <source>
        <dbReference type="UniProtKB" id="O31743"/>
    </source>
</evidence>
<evidence type="ECO:0000250" key="2">
    <source>
        <dbReference type="UniProtKB" id="Q03151"/>
    </source>
</evidence>
<evidence type="ECO:0000255" key="3"/>
<evidence type="ECO:0000255" key="4">
    <source>
        <dbReference type="PROSITE-ProRule" id="PRU01058"/>
    </source>
</evidence>
<evidence type="ECO:0000312" key="5">
    <source>
        <dbReference type="EMBL" id="EEB05638.1"/>
    </source>
</evidence>
<name>MTG1_SCHJY</name>